<keyword id="KW-1185">Reference proteome</keyword>
<comment type="sequence caution" evidence="2">
    <conflict type="erroneous gene model prediction">
        <sequence resource="EMBL-CDS" id="AEE75961"/>
    </conflict>
</comment>
<dbReference type="EMBL" id="AB022219">
    <property type="protein sequence ID" value="BAB02039.1"/>
    <property type="molecule type" value="Genomic_DNA"/>
</dbReference>
<dbReference type="EMBL" id="CP002686">
    <property type="protein sequence ID" value="AEE75961.1"/>
    <property type="status" value="ALT_SEQ"/>
    <property type="molecule type" value="Genomic_DNA"/>
</dbReference>
<dbReference type="EMBL" id="CP002686">
    <property type="protein sequence ID" value="ANM65560.1"/>
    <property type="molecule type" value="Genomic_DNA"/>
</dbReference>
<dbReference type="RefSeq" id="NP_001327519.1">
    <property type="nucleotide sequence ID" value="NM_001338293.1"/>
</dbReference>
<dbReference type="RefSeq" id="NP_188377.1">
    <property type="nucleotide sequence ID" value="NM_112630.1"/>
</dbReference>
<dbReference type="SMR" id="Q9LUP7"/>
<dbReference type="FunCoup" id="Q9LUP7">
    <property type="interactions" value="49"/>
</dbReference>
<dbReference type="STRING" id="3702.Q9LUP7"/>
<dbReference type="PaxDb" id="3702-AT3G17500.1"/>
<dbReference type="ProteomicsDB" id="230642"/>
<dbReference type="EnsemblPlants" id="AT3G17500.2">
    <property type="protein sequence ID" value="AT3G17500.2"/>
    <property type="gene ID" value="AT3G17500"/>
</dbReference>
<dbReference type="GeneID" id="821015"/>
<dbReference type="Gramene" id="AT3G17500.2">
    <property type="protein sequence ID" value="AT3G17500.2"/>
    <property type="gene ID" value="AT3G17500"/>
</dbReference>
<dbReference type="KEGG" id="ath:AT3G17500"/>
<dbReference type="Araport" id="AT3G17500"/>
<dbReference type="TAIR" id="AT3G17500"/>
<dbReference type="HOGENOM" id="CLU_034692_0_0_1"/>
<dbReference type="InParanoid" id="Q9LUP7"/>
<dbReference type="OMA" id="LLCITWG"/>
<dbReference type="PhylomeDB" id="Q9LUP7"/>
<dbReference type="PRO" id="PR:Q9LUP7"/>
<dbReference type="Proteomes" id="UP000006548">
    <property type="component" value="Chromosome 3"/>
</dbReference>
<dbReference type="ExpressionAtlas" id="Q9LUP7">
    <property type="expression patterns" value="baseline and differential"/>
</dbReference>
<dbReference type="CDD" id="cd22157">
    <property type="entry name" value="F-box_AtFBW1-like"/>
    <property type="match status" value="1"/>
</dbReference>
<dbReference type="Gene3D" id="1.20.1280.50">
    <property type="match status" value="1"/>
</dbReference>
<dbReference type="InterPro" id="IPR006527">
    <property type="entry name" value="F-box-assoc_dom_typ1"/>
</dbReference>
<dbReference type="InterPro" id="IPR017451">
    <property type="entry name" value="F-box-assoc_interact_dom"/>
</dbReference>
<dbReference type="InterPro" id="IPR036047">
    <property type="entry name" value="F-box-like_dom_sf"/>
</dbReference>
<dbReference type="InterPro" id="IPR001810">
    <property type="entry name" value="F-box_dom"/>
</dbReference>
<dbReference type="InterPro" id="IPR011043">
    <property type="entry name" value="Gal_Oxase/kelch_b-propeller"/>
</dbReference>
<dbReference type="InterPro" id="IPR050796">
    <property type="entry name" value="SCF_F-box_component"/>
</dbReference>
<dbReference type="NCBIfam" id="TIGR01640">
    <property type="entry name" value="F_box_assoc_1"/>
    <property type="match status" value="1"/>
</dbReference>
<dbReference type="PANTHER" id="PTHR31672">
    <property type="entry name" value="BNACNNG10540D PROTEIN"/>
    <property type="match status" value="1"/>
</dbReference>
<dbReference type="PANTHER" id="PTHR31672:SF13">
    <property type="entry name" value="F-BOX PROTEIN CPR30-LIKE"/>
    <property type="match status" value="1"/>
</dbReference>
<dbReference type="Pfam" id="PF00646">
    <property type="entry name" value="F-box"/>
    <property type="match status" value="1"/>
</dbReference>
<dbReference type="Pfam" id="PF07734">
    <property type="entry name" value="FBA_1"/>
    <property type="match status" value="1"/>
</dbReference>
<dbReference type="SMART" id="SM00256">
    <property type="entry name" value="FBOX"/>
    <property type="match status" value="1"/>
</dbReference>
<dbReference type="SUPFAM" id="SSF81383">
    <property type="entry name" value="F-box domain"/>
    <property type="match status" value="1"/>
</dbReference>
<dbReference type="SUPFAM" id="SSF50965">
    <property type="entry name" value="Galactose oxidase, central domain"/>
    <property type="match status" value="1"/>
</dbReference>
<dbReference type="PROSITE" id="PS50181">
    <property type="entry name" value="FBOX"/>
    <property type="match status" value="1"/>
</dbReference>
<gene>
    <name type="ordered locus">At3g17500</name>
    <name type="ORF">MKP6.5</name>
</gene>
<protein>
    <recommendedName>
        <fullName>Putative F-box protein At3g17500</fullName>
    </recommendedName>
</protein>
<evidence type="ECO:0000255" key="1">
    <source>
        <dbReference type="PROSITE-ProRule" id="PRU00080"/>
    </source>
</evidence>
<evidence type="ECO:0000305" key="2"/>
<sequence>MMSNLPLDLVEEILSRVPATSLKRLRSTCKSWNNCYKDQRFTEKHSVIAAKQFLVLMLKDCRVSSVSVNLNEIHNNIAAPSIELKGVVGPQMQISGIFHCDGLLLCTTKDDRLEVWNPCTGQTRRVQHSIHYKTNSEFVLGYVNNNSRHSYKILRYWNFYMSNYRVSEFEIYDFSSDSWRFIDEVNPYCLTEGEVSLKGNTYWLASDEKRDIDLILRFDFSIERYQRLNLPILKSDYETEALSVVREKQLSVLLKRNDTLEREIWVTTNDKIDHTTKNLLWIKFLAIDQRTCYHWSCVSFFIDEEKKMAVFCDGYIGGINETSRRMFYIIGEDKYYRELYVGDSPIRSHRPFVFNYVPSLVQIPQATVIPKRRRRKRKNRN</sequence>
<proteinExistence type="predicted"/>
<feature type="chain" id="PRO_0000283424" description="Putative F-box protein At3g17500">
    <location>
        <begin position="1"/>
        <end position="381"/>
    </location>
</feature>
<feature type="domain" description="F-box" evidence="1">
    <location>
        <begin position="1"/>
        <end position="45"/>
    </location>
</feature>
<name>FB154_ARATH</name>
<accession>Q9LUP7</accession>
<accession>F4J570</accession>
<reference key="1">
    <citation type="journal article" date="2000" name="DNA Res.">
        <title>Structural analysis of Arabidopsis thaliana chromosome 3. I. Sequence features of the regions of 4,504,864 bp covered by sixty P1 and TAC clones.</title>
        <authorList>
            <person name="Sato S."/>
            <person name="Nakamura Y."/>
            <person name="Kaneko T."/>
            <person name="Katoh T."/>
            <person name="Asamizu E."/>
            <person name="Tabata S."/>
        </authorList>
    </citation>
    <scope>NUCLEOTIDE SEQUENCE [LARGE SCALE GENOMIC DNA]</scope>
    <source>
        <strain>cv. Columbia</strain>
    </source>
</reference>
<reference key="2">
    <citation type="journal article" date="2017" name="Plant J.">
        <title>Araport11: a complete reannotation of the Arabidopsis thaliana reference genome.</title>
        <authorList>
            <person name="Cheng C.Y."/>
            <person name="Krishnakumar V."/>
            <person name="Chan A.P."/>
            <person name="Thibaud-Nissen F."/>
            <person name="Schobel S."/>
            <person name="Town C.D."/>
        </authorList>
    </citation>
    <scope>GENOME REANNOTATION</scope>
    <source>
        <strain>cv. Columbia</strain>
    </source>
</reference>
<organism>
    <name type="scientific">Arabidopsis thaliana</name>
    <name type="common">Mouse-ear cress</name>
    <dbReference type="NCBI Taxonomy" id="3702"/>
    <lineage>
        <taxon>Eukaryota</taxon>
        <taxon>Viridiplantae</taxon>
        <taxon>Streptophyta</taxon>
        <taxon>Embryophyta</taxon>
        <taxon>Tracheophyta</taxon>
        <taxon>Spermatophyta</taxon>
        <taxon>Magnoliopsida</taxon>
        <taxon>eudicotyledons</taxon>
        <taxon>Gunneridae</taxon>
        <taxon>Pentapetalae</taxon>
        <taxon>rosids</taxon>
        <taxon>malvids</taxon>
        <taxon>Brassicales</taxon>
        <taxon>Brassicaceae</taxon>
        <taxon>Camelineae</taxon>
        <taxon>Arabidopsis</taxon>
    </lineage>
</organism>